<proteinExistence type="inferred from homology"/>
<keyword id="KW-1185">Reference proteome</keyword>
<keyword id="KW-0687">Ribonucleoprotein</keyword>
<keyword id="KW-0689">Ribosomal protein</keyword>
<dbReference type="EMBL" id="CP000542">
    <property type="protein sequence ID" value="ABM58382.1"/>
    <property type="molecule type" value="Genomic_DNA"/>
</dbReference>
<dbReference type="RefSeq" id="WP_011810381.1">
    <property type="nucleotide sequence ID" value="NC_008786.1"/>
</dbReference>
<dbReference type="SMR" id="A1WL75"/>
<dbReference type="STRING" id="391735.Veis_2639"/>
<dbReference type="GeneID" id="76461151"/>
<dbReference type="KEGG" id="vei:Veis_2639"/>
<dbReference type="eggNOG" id="COG0103">
    <property type="taxonomic scope" value="Bacteria"/>
</dbReference>
<dbReference type="HOGENOM" id="CLU_046483_2_1_4"/>
<dbReference type="OrthoDB" id="9803965at2"/>
<dbReference type="Proteomes" id="UP000000374">
    <property type="component" value="Chromosome"/>
</dbReference>
<dbReference type="GO" id="GO:0022627">
    <property type="term" value="C:cytosolic small ribosomal subunit"/>
    <property type="evidence" value="ECO:0007669"/>
    <property type="project" value="TreeGrafter"/>
</dbReference>
<dbReference type="GO" id="GO:0003723">
    <property type="term" value="F:RNA binding"/>
    <property type="evidence" value="ECO:0007669"/>
    <property type="project" value="TreeGrafter"/>
</dbReference>
<dbReference type="GO" id="GO:0003735">
    <property type="term" value="F:structural constituent of ribosome"/>
    <property type="evidence" value="ECO:0007669"/>
    <property type="project" value="InterPro"/>
</dbReference>
<dbReference type="GO" id="GO:0006412">
    <property type="term" value="P:translation"/>
    <property type="evidence" value="ECO:0007669"/>
    <property type="project" value="UniProtKB-UniRule"/>
</dbReference>
<dbReference type="FunFam" id="3.30.230.10:FF:000001">
    <property type="entry name" value="30S ribosomal protein S9"/>
    <property type="match status" value="1"/>
</dbReference>
<dbReference type="Gene3D" id="3.30.230.10">
    <property type="match status" value="1"/>
</dbReference>
<dbReference type="HAMAP" id="MF_00532_B">
    <property type="entry name" value="Ribosomal_uS9_B"/>
    <property type="match status" value="1"/>
</dbReference>
<dbReference type="InterPro" id="IPR020568">
    <property type="entry name" value="Ribosomal_Su5_D2-typ_SF"/>
</dbReference>
<dbReference type="InterPro" id="IPR000754">
    <property type="entry name" value="Ribosomal_uS9"/>
</dbReference>
<dbReference type="InterPro" id="IPR023035">
    <property type="entry name" value="Ribosomal_uS9_bac/plastid"/>
</dbReference>
<dbReference type="InterPro" id="IPR020574">
    <property type="entry name" value="Ribosomal_uS9_CS"/>
</dbReference>
<dbReference type="InterPro" id="IPR014721">
    <property type="entry name" value="Ribsml_uS5_D2-typ_fold_subgr"/>
</dbReference>
<dbReference type="NCBIfam" id="NF001099">
    <property type="entry name" value="PRK00132.1"/>
    <property type="match status" value="1"/>
</dbReference>
<dbReference type="PANTHER" id="PTHR21569">
    <property type="entry name" value="RIBOSOMAL PROTEIN S9"/>
    <property type="match status" value="1"/>
</dbReference>
<dbReference type="PANTHER" id="PTHR21569:SF1">
    <property type="entry name" value="SMALL RIBOSOMAL SUBUNIT PROTEIN US9M"/>
    <property type="match status" value="1"/>
</dbReference>
<dbReference type="Pfam" id="PF00380">
    <property type="entry name" value="Ribosomal_S9"/>
    <property type="match status" value="1"/>
</dbReference>
<dbReference type="SUPFAM" id="SSF54211">
    <property type="entry name" value="Ribosomal protein S5 domain 2-like"/>
    <property type="match status" value="1"/>
</dbReference>
<dbReference type="PROSITE" id="PS00360">
    <property type="entry name" value="RIBOSOMAL_S9"/>
    <property type="match status" value="1"/>
</dbReference>
<name>RS9_VEREI</name>
<reference key="1">
    <citation type="submission" date="2006-12" db="EMBL/GenBank/DDBJ databases">
        <title>Complete sequence of chromosome 1 of Verminephrobacter eiseniae EF01-2.</title>
        <authorList>
            <person name="Copeland A."/>
            <person name="Lucas S."/>
            <person name="Lapidus A."/>
            <person name="Barry K."/>
            <person name="Detter J.C."/>
            <person name="Glavina del Rio T."/>
            <person name="Dalin E."/>
            <person name="Tice H."/>
            <person name="Pitluck S."/>
            <person name="Chertkov O."/>
            <person name="Brettin T."/>
            <person name="Bruce D."/>
            <person name="Han C."/>
            <person name="Tapia R."/>
            <person name="Gilna P."/>
            <person name="Schmutz J."/>
            <person name="Larimer F."/>
            <person name="Land M."/>
            <person name="Hauser L."/>
            <person name="Kyrpides N."/>
            <person name="Kim E."/>
            <person name="Stahl D."/>
            <person name="Richardson P."/>
        </authorList>
    </citation>
    <scope>NUCLEOTIDE SEQUENCE [LARGE SCALE GENOMIC DNA]</scope>
    <source>
        <strain>EF01-2</strain>
    </source>
</reference>
<sequence>MIGQWNNGTGRRKSSVARVFLKKGSGKITINGKDIQSYFGRETSIMIARQPLALTNHVETFDIRINVYGGGESGQAGAARHGITRALIDYDAALKPALSQAGFVTRDAREVERKKVGLHSARRAKQFSKR</sequence>
<comment type="similarity">
    <text evidence="1">Belongs to the universal ribosomal protein uS9 family.</text>
</comment>
<organism>
    <name type="scientific">Verminephrobacter eiseniae (strain EF01-2)</name>
    <dbReference type="NCBI Taxonomy" id="391735"/>
    <lineage>
        <taxon>Bacteria</taxon>
        <taxon>Pseudomonadati</taxon>
        <taxon>Pseudomonadota</taxon>
        <taxon>Betaproteobacteria</taxon>
        <taxon>Burkholderiales</taxon>
        <taxon>Comamonadaceae</taxon>
        <taxon>Verminephrobacter</taxon>
    </lineage>
</organism>
<feature type="chain" id="PRO_1000051361" description="Small ribosomal subunit protein uS9">
    <location>
        <begin position="1"/>
        <end position="130"/>
    </location>
</feature>
<accession>A1WL75</accession>
<protein>
    <recommendedName>
        <fullName evidence="1">Small ribosomal subunit protein uS9</fullName>
    </recommendedName>
    <alternativeName>
        <fullName evidence="2">30S ribosomal protein S9</fullName>
    </alternativeName>
</protein>
<gene>
    <name evidence="1" type="primary">rpsI</name>
    <name type="ordered locus">Veis_2639</name>
</gene>
<evidence type="ECO:0000255" key="1">
    <source>
        <dbReference type="HAMAP-Rule" id="MF_00532"/>
    </source>
</evidence>
<evidence type="ECO:0000305" key="2"/>